<proteinExistence type="inferred from homology"/>
<name>PSAM_CYACA</name>
<feature type="chain" id="PRO_0000207760" description="Photosystem I reaction center subunit XII">
    <location>
        <begin position="1"/>
        <end position="30"/>
    </location>
</feature>
<feature type="transmembrane region" description="Helical" evidence="1">
    <location>
        <begin position="7"/>
        <end position="27"/>
    </location>
</feature>
<geneLocation type="chloroplast"/>
<reference key="1">
    <citation type="journal article" date="2000" name="J. Mol. Evol.">
        <title>The structure and gene repertoire of an ancient red algal plastid genome.</title>
        <authorList>
            <person name="Gloeckner G."/>
            <person name="Rosenthal A."/>
            <person name="Valentin K.-U."/>
        </authorList>
    </citation>
    <scope>NUCLEOTIDE SEQUENCE [LARGE SCALE GENOMIC DNA]</scope>
    <source>
        <strain>RK-1</strain>
    </source>
</reference>
<comment type="subcellular location">
    <subcellularLocation>
        <location evidence="1">Plastid</location>
        <location evidence="1">Chloroplast thylakoid membrane</location>
        <topology evidence="1">Single-pass membrane protein</topology>
    </subcellularLocation>
</comment>
<comment type="similarity">
    <text evidence="1">Belongs to the PsaM family.</text>
</comment>
<sequence length="30" mass="3236">MITDSQVFIGLVIALVPAILAFKLGLSLYE</sequence>
<evidence type="ECO:0000255" key="1">
    <source>
        <dbReference type="HAMAP-Rule" id="MF_00828"/>
    </source>
</evidence>
<gene>
    <name evidence="1" type="primary">psaM</name>
</gene>
<organism>
    <name type="scientific">Cyanidium caldarium</name>
    <name type="common">Red alga</name>
    <dbReference type="NCBI Taxonomy" id="2771"/>
    <lineage>
        <taxon>Eukaryota</taxon>
        <taxon>Rhodophyta</taxon>
        <taxon>Bangiophyceae</taxon>
        <taxon>Cyanidiales</taxon>
        <taxon>Cyanidiaceae</taxon>
        <taxon>Cyanidium</taxon>
    </lineage>
</organism>
<protein>
    <recommendedName>
        <fullName evidence="1">Photosystem I reaction center subunit XII</fullName>
    </recommendedName>
    <alternativeName>
        <fullName evidence="1">PSI-M</fullName>
    </alternativeName>
</protein>
<accession>Q9TLX5</accession>
<keyword id="KW-0150">Chloroplast</keyword>
<keyword id="KW-0472">Membrane</keyword>
<keyword id="KW-0602">Photosynthesis</keyword>
<keyword id="KW-0603">Photosystem I</keyword>
<keyword id="KW-0934">Plastid</keyword>
<keyword id="KW-0793">Thylakoid</keyword>
<keyword id="KW-0812">Transmembrane</keyword>
<keyword id="KW-1133">Transmembrane helix</keyword>
<dbReference type="EMBL" id="AF022186">
    <property type="protein sequence ID" value="AAF12951.1"/>
    <property type="molecule type" value="Genomic_DNA"/>
</dbReference>
<dbReference type="RefSeq" id="NP_045143.1">
    <property type="nucleotide sequence ID" value="NC_001840.1"/>
</dbReference>
<dbReference type="SMR" id="Q9TLX5"/>
<dbReference type="GeneID" id="800127"/>
<dbReference type="GO" id="GO:0009535">
    <property type="term" value="C:chloroplast thylakoid membrane"/>
    <property type="evidence" value="ECO:0007669"/>
    <property type="project" value="UniProtKB-SubCell"/>
</dbReference>
<dbReference type="GO" id="GO:0009522">
    <property type="term" value="C:photosystem I"/>
    <property type="evidence" value="ECO:0007669"/>
    <property type="project" value="UniProtKB-KW"/>
</dbReference>
<dbReference type="GO" id="GO:0015979">
    <property type="term" value="P:photosynthesis"/>
    <property type="evidence" value="ECO:0007669"/>
    <property type="project" value="UniProtKB-UniRule"/>
</dbReference>
<dbReference type="HAMAP" id="MF_00828">
    <property type="entry name" value="PSI_PsaM"/>
    <property type="match status" value="1"/>
</dbReference>
<dbReference type="InterPro" id="IPR010010">
    <property type="entry name" value="PSI_PsaM"/>
</dbReference>
<dbReference type="InterPro" id="IPR037279">
    <property type="entry name" value="PSI_PsaM_sf"/>
</dbReference>
<dbReference type="NCBIfam" id="TIGR03053">
    <property type="entry name" value="PS_I_psaM"/>
    <property type="match status" value="1"/>
</dbReference>
<dbReference type="Pfam" id="PF07465">
    <property type="entry name" value="PsaM"/>
    <property type="match status" value="1"/>
</dbReference>
<dbReference type="SUPFAM" id="SSF81548">
    <property type="entry name" value="Subunit XII of photosystem I reaction centre, PsaM"/>
    <property type="match status" value="1"/>
</dbReference>